<proteinExistence type="inferred from homology"/>
<keyword id="KW-0479">Metal-binding</keyword>
<keyword id="KW-0560">Oxidoreductase</keyword>
<keyword id="KW-1185">Reference proteome</keyword>
<keyword id="KW-0862">Zinc</keyword>
<protein>
    <recommendedName>
        <fullName evidence="2">Histidinol dehydrogenase homolog</fullName>
        <ecNumber evidence="2">1.1.-.-</ecNumber>
    </recommendedName>
</protein>
<feature type="chain" id="PRO_0000229864" description="Histidinol dehydrogenase homolog">
    <location>
        <begin position="1"/>
        <end position="441"/>
    </location>
</feature>
<feature type="active site" description="Proton acceptor" evidence="1">
    <location>
        <position position="334"/>
    </location>
</feature>
<feature type="active site" description="Proton acceptor" evidence="1">
    <location>
        <position position="335"/>
    </location>
</feature>
<feature type="binding site" evidence="1">
    <location>
        <position position="266"/>
    </location>
    <ligand>
        <name>Zn(2+)</name>
        <dbReference type="ChEBI" id="CHEBI:29105"/>
    </ligand>
</feature>
<feature type="binding site" evidence="1">
    <location>
        <position position="427"/>
    </location>
    <ligand>
        <name>Zn(2+)</name>
        <dbReference type="ChEBI" id="CHEBI:29105"/>
    </ligand>
</feature>
<dbReference type="EC" id="1.1.-.-" evidence="2"/>
<dbReference type="EMBL" id="CP000143">
    <property type="protein sequence ID" value="ABA78308.1"/>
    <property type="molecule type" value="Genomic_DNA"/>
</dbReference>
<dbReference type="RefSeq" id="WP_011337274.1">
    <property type="nucleotide sequence ID" value="NC_007493.2"/>
</dbReference>
<dbReference type="RefSeq" id="YP_352209.1">
    <property type="nucleotide sequence ID" value="NC_007493.2"/>
</dbReference>
<dbReference type="SMR" id="Q3J4H6"/>
<dbReference type="STRING" id="272943.RSP_2155"/>
<dbReference type="EnsemblBacteria" id="ABA78308">
    <property type="protein sequence ID" value="ABA78308"/>
    <property type="gene ID" value="RSP_2155"/>
</dbReference>
<dbReference type="GeneID" id="3719625"/>
<dbReference type="KEGG" id="rsp:RSP_2155"/>
<dbReference type="PATRIC" id="fig|272943.9.peg.1051"/>
<dbReference type="eggNOG" id="COG0141">
    <property type="taxonomic scope" value="Bacteria"/>
</dbReference>
<dbReference type="OrthoDB" id="9805269at2"/>
<dbReference type="PhylomeDB" id="Q3J4H6"/>
<dbReference type="Proteomes" id="UP000002703">
    <property type="component" value="Chromosome 1"/>
</dbReference>
<dbReference type="GO" id="GO:0005829">
    <property type="term" value="C:cytosol"/>
    <property type="evidence" value="ECO:0007669"/>
    <property type="project" value="TreeGrafter"/>
</dbReference>
<dbReference type="GO" id="GO:0004399">
    <property type="term" value="F:histidinol dehydrogenase activity"/>
    <property type="evidence" value="ECO:0007669"/>
    <property type="project" value="InterPro"/>
</dbReference>
<dbReference type="GO" id="GO:0046872">
    <property type="term" value="F:metal ion binding"/>
    <property type="evidence" value="ECO:0007669"/>
    <property type="project" value="UniProtKB-KW"/>
</dbReference>
<dbReference type="GO" id="GO:0051287">
    <property type="term" value="F:NAD binding"/>
    <property type="evidence" value="ECO:0007669"/>
    <property type="project" value="InterPro"/>
</dbReference>
<dbReference type="GO" id="GO:0000105">
    <property type="term" value="P:L-histidine biosynthetic process"/>
    <property type="evidence" value="ECO:0007669"/>
    <property type="project" value="InterPro"/>
</dbReference>
<dbReference type="CDD" id="cd06572">
    <property type="entry name" value="Histidinol_dh"/>
    <property type="match status" value="1"/>
</dbReference>
<dbReference type="FunFam" id="3.40.50.1980:FF:000001">
    <property type="entry name" value="Histidinol dehydrogenase"/>
    <property type="match status" value="1"/>
</dbReference>
<dbReference type="Gene3D" id="1.20.5.1300">
    <property type="match status" value="1"/>
</dbReference>
<dbReference type="Gene3D" id="3.40.50.1980">
    <property type="entry name" value="Nitrogenase molybdenum iron protein domain"/>
    <property type="match status" value="2"/>
</dbReference>
<dbReference type="InterPro" id="IPR016161">
    <property type="entry name" value="Ald_DH/histidinol_DH"/>
</dbReference>
<dbReference type="InterPro" id="IPR001692">
    <property type="entry name" value="Histidinol_DH_CS"/>
</dbReference>
<dbReference type="InterPro" id="IPR022695">
    <property type="entry name" value="Histidinol_DH_monofunct"/>
</dbReference>
<dbReference type="InterPro" id="IPR012131">
    <property type="entry name" value="Hstdl_DH"/>
</dbReference>
<dbReference type="NCBIfam" id="TIGR00069">
    <property type="entry name" value="hisD"/>
    <property type="match status" value="1"/>
</dbReference>
<dbReference type="PANTHER" id="PTHR21256:SF2">
    <property type="entry name" value="HISTIDINE BIOSYNTHESIS TRIFUNCTIONAL PROTEIN"/>
    <property type="match status" value="1"/>
</dbReference>
<dbReference type="PANTHER" id="PTHR21256">
    <property type="entry name" value="HISTIDINOL DEHYDROGENASE HDH"/>
    <property type="match status" value="1"/>
</dbReference>
<dbReference type="Pfam" id="PF00815">
    <property type="entry name" value="Histidinol_dh"/>
    <property type="match status" value="1"/>
</dbReference>
<dbReference type="PIRSF" id="PIRSF000099">
    <property type="entry name" value="Histidinol_dh"/>
    <property type="match status" value="1"/>
</dbReference>
<dbReference type="PRINTS" id="PR00083">
    <property type="entry name" value="HOLDHDRGNASE"/>
</dbReference>
<dbReference type="SUPFAM" id="SSF53720">
    <property type="entry name" value="ALDH-like"/>
    <property type="match status" value="1"/>
</dbReference>
<dbReference type="PROSITE" id="PS00611">
    <property type="entry name" value="HISOL_DEHYDROGENASE"/>
    <property type="match status" value="1"/>
</dbReference>
<organism>
    <name type="scientific">Cereibacter sphaeroides (strain ATCC 17023 / DSM 158 / JCM 6121 / CCUG 31486 / LMG 2827 / NBRC 12203 / NCIMB 8253 / ATH 2.4.1.)</name>
    <name type="common">Rhodobacter sphaeroides</name>
    <dbReference type="NCBI Taxonomy" id="272943"/>
    <lineage>
        <taxon>Bacteria</taxon>
        <taxon>Pseudomonadati</taxon>
        <taxon>Pseudomonadota</taxon>
        <taxon>Alphaproteobacteria</taxon>
        <taxon>Rhodobacterales</taxon>
        <taxon>Paracoccaceae</taxon>
        <taxon>Cereibacter</taxon>
    </lineage>
</organism>
<name>HISXH_CERS4</name>
<reference key="1">
    <citation type="submission" date="2005-09" db="EMBL/GenBank/DDBJ databases">
        <title>Complete sequence of chromosome 1 of Rhodobacter sphaeroides 2.4.1.</title>
        <authorList>
            <person name="Copeland A."/>
            <person name="Lucas S."/>
            <person name="Lapidus A."/>
            <person name="Barry K."/>
            <person name="Detter J.C."/>
            <person name="Glavina T."/>
            <person name="Hammon N."/>
            <person name="Israni S."/>
            <person name="Pitluck S."/>
            <person name="Richardson P."/>
            <person name="Mackenzie C."/>
            <person name="Choudhary M."/>
            <person name="Larimer F."/>
            <person name="Hauser L.J."/>
            <person name="Land M."/>
            <person name="Donohue T.J."/>
            <person name="Kaplan S."/>
        </authorList>
    </citation>
    <scope>NUCLEOTIDE SEQUENCE [LARGE SCALE GENOMIC DNA]</scope>
    <source>
        <strain>ATCC 17023 / DSM 158 / JCM 6121 / CCUG 31486 / LMG 2827 / NBRC 12203 / NCIMB 8253 / ATH 2.4.1.</strain>
    </source>
</reference>
<gene>
    <name type="ordered locus">RHOS4_07400</name>
    <name type="ORF">RSP_2155</name>
</gene>
<sequence>MVQVNFQVLAELDAAGRAALLRRSETDLSMFLEKVGPILEAVRTEGDAALVRFGRELDRAEGLTREGLKVTEAEFDEAFGLVEPEIVAAIRFAIGNIRTFHEEQAPEPMWLKELRPGAFAGDRFTPIRSVALYVPRGKGSFPSVTMMTSVPAVVAKVPQIAIFTPPAPDGRVDAATLVAARLAGVETVYKVGGAQAVAAAAYGTETVTPALKIVGPGSPWVVAAKRLLAGVIDPGLPAGPSESIILADETVHGGLAALDLLIEAEHGPDSSAWLVTHSRQVAEEALAALPGHWSAMTPQRVDFSQAVLCGRAGGIVLTGSAEESHAFVNDYAPEHLQILSEKPFEHLGRITEAAEVLMGPHTPITIANFCLGPNAVLPTSRGARTWGPLSVHDFLRRSSVGYVTAPAYPELAEVAKRLAEYEGFSSHANAVGPMRDAYLKR</sequence>
<evidence type="ECO:0000250" key="1">
    <source>
        <dbReference type="UniProtKB" id="P06988"/>
    </source>
</evidence>
<evidence type="ECO:0000305" key="2"/>
<accession>Q3J4H6</accession>
<comment type="cofactor">
    <cofactor evidence="1">
        <name>Zn(2+)</name>
        <dbReference type="ChEBI" id="CHEBI:29105"/>
    </cofactor>
    <text evidence="1">Binds 1 zinc ion per subunit.</text>
</comment>
<comment type="similarity">
    <text evidence="2">Belongs to the histidinol dehydrogenase family.</text>
</comment>
<comment type="caution">
    <text evidence="2">The conserved zinc-binding site Asp residue in position 368 is replaced by an Asn.</text>
</comment>